<proteinExistence type="inferred from homology"/>
<feature type="chain" id="PRO_1000055461" description="Large ribosomal subunit protein uL13">
    <location>
        <begin position="1"/>
        <end position="158"/>
    </location>
</feature>
<sequence>MKTYSAKPSEIEKKWWVIDAKNIVLGRLASRVANMLRGKHKPSFTPHLDCGDNIIIINAAHVKLTGKKANTKDGKIYYRHTGFPGGIKNTTAGKILAGKHPERVIKMAVKRMITRNALGAKQMSNLYVYANSDHPHVGQEPVIYDFASQNPKNKSNYL</sequence>
<evidence type="ECO:0000255" key="1">
    <source>
        <dbReference type="HAMAP-Rule" id="MF_01366"/>
    </source>
</evidence>
<evidence type="ECO:0000305" key="2"/>
<dbReference type="EMBL" id="CP000409">
    <property type="protein sequence ID" value="ABV73214.1"/>
    <property type="molecule type" value="Genomic_DNA"/>
</dbReference>
<dbReference type="RefSeq" id="WP_012148413.1">
    <property type="nucleotide sequence ID" value="NC_009879.1"/>
</dbReference>
<dbReference type="SMR" id="A8EXY1"/>
<dbReference type="STRING" id="293613.A1E_01345"/>
<dbReference type="KEGG" id="rcm:A1E_01345"/>
<dbReference type="eggNOG" id="COG0102">
    <property type="taxonomic scope" value="Bacteria"/>
</dbReference>
<dbReference type="HOGENOM" id="CLU_082184_2_0_5"/>
<dbReference type="Proteomes" id="UP000007056">
    <property type="component" value="Chromosome"/>
</dbReference>
<dbReference type="GO" id="GO:0022625">
    <property type="term" value="C:cytosolic large ribosomal subunit"/>
    <property type="evidence" value="ECO:0007669"/>
    <property type="project" value="TreeGrafter"/>
</dbReference>
<dbReference type="GO" id="GO:0003729">
    <property type="term" value="F:mRNA binding"/>
    <property type="evidence" value="ECO:0007669"/>
    <property type="project" value="TreeGrafter"/>
</dbReference>
<dbReference type="GO" id="GO:0003735">
    <property type="term" value="F:structural constituent of ribosome"/>
    <property type="evidence" value="ECO:0007669"/>
    <property type="project" value="InterPro"/>
</dbReference>
<dbReference type="GO" id="GO:0017148">
    <property type="term" value="P:negative regulation of translation"/>
    <property type="evidence" value="ECO:0007669"/>
    <property type="project" value="TreeGrafter"/>
</dbReference>
<dbReference type="GO" id="GO:0006412">
    <property type="term" value="P:translation"/>
    <property type="evidence" value="ECO:0007669"/>
    <property type="project" value="UniProtKB-UniRule"/>
</dbReference>
<dbReference type="CDD" id="cd00392">
    <property type="entry name" value="Ribosomal_L13"/>
    <property type="match status" value="1"/>
</dbReference>
<dbReference type="Gene3D" id="3.90.1180.10">
    <property type="entry name" value="Ribosomal protein L13"/>
    <property type="match status" value="1"/>
</dbReference>
<dbReference type="HAMAP" id="MF_01366">
    <property type="entry name" value="Ribosomal_uL13"/>
    <property type="match status" value="1"/>
</dbReference>
<dbReference type="InterPro" id="IPR005822">
    <property type="entry name" value="Ribosomal_uL13"/>
</dbReference>
<dbReference type="InterPro" id="IPR005823">
    <property type="entry name" value="Ribosomal_uL13_bac-type"/>
</dbReference>
<dbReference type="InterPro" id="IPR023563">
    <property type="entry name" value="Ribosomal_uL13_CS"/>
</dbReference>
<dbReference type="InterPro" id="IPR036899">
    <property type="entry name" value="Ribosomal_uL13_sf"/>
</dbReference>
<dbReference type="NCBIfam" id="TIGR01066">
    <property type="entry name" value="rplM_bact"/>
    <property type="match status" value="1"/>
</dbReference>
<dbReference type="PANTHER" id="PTHR11545:SF2">
    <property type="entry name" value="LARGE RIBOSOMAL SUBUNIT PROTEIN UL13M"/>
    <property type="match status" value="1"/>
</dbReference>
<dbReference type="PANTHER" id="PTHR11545">
    <property type="entry name" value="RIBOSOMAL PROTEIN L13"/>
    <property type="match status" value="1"/>
</dbReference>
<dbReference type="Pfam" id="PF00572">
    <property type="entry name" value="Ribosomal_L13"/>
    <property type="match status" value="1"/>
</dbReference>
<dbReference type="PIRSF" id="PIRSF002181">
    <property type="entry name" value="Ribosomal_L13"/>
    <property type="match status" value="1"/>
</dbReference>
<dbReference type="SUPFAM" id="SSF52161">
    <property type="entry name" value="Ribosomal protein L13"/>
    <property type="match status" value="1"/>
</dbReference>
<dbReference type="PROSITE" id="PS00783">
    <property type="entry name" value="RIBOSOMAL_L13"/>
    <property type="match status" value="1"/>
</dbReference>
<accession>A8EXY1</accession>
<protein>
    <recommendedName>
        <fullName evidence="1">Large ribosomal subunit protein uL13</fullName>
    </recommendedName>
    <alternativeName>
        <fullName evidence="2">50S ribosomal protein L13</fullName>
    </alternativeName>
</protein>
<gene>
    <name evidence="1" type="primary">rplM</name>
    <name type="ordered locus">A1E_01345</name>
</gene>
<reference key="1">
    <citation type="submission" date="2007-09" db="EMBL/GenBank/DDBJ databases">
        <title>Complete genome sequence of Rickettsia canadensis.</title>
        <authorList>
            <person name="Madan A."/>
            <person name="Fahey J."/>
            <person name="Helton E."/>
            <person name="Ketteman M."/>
            <person name="Madan A."/>
            <person name="Rodrigues S."/>
            <person name="Sanchez A."/>
            <person name="Whiting M."/>
            <person name="Dasch G."/>
            <person name="Eremeeva M."/>
        </authorList>
    </citation>
    <scope>NUCLEOTIDE SEQUENCE [LARGE SCALE GENOMIC DNA]</scope>
    <source>
        <strain>McKiel</strain>
    </source>
</reference>
<name>RL13_RICCK</name>
<comment type="function">
    <text evidence="1">This protein is one of the early assembly proteins of the 50S ribosomal subunit, although it is not seen to bind rRNA by itself. It is important during the early stages of 50S assembly.</text>
</comment>
<comment type="subunit">
    <text evidence="1">Part of the 50S ribosomal subunit.</text>
</comment>
<comment type="similarity">
    <text evidence="1">Belongs to the universal ribosomal protein uL13 family.</text>
</comment>
<organism>
    <name type="scientific">Rickettsia canadensis (strain McKiel)</name>
    <dbReference type="NCBI Taxonomy" id="293613"/>
    <lineage>
        <taxon>Bacteria</taxon>
        <taxon>Pseudomonadati</taxon>
        <taxon>Pseudomonadota</taxon>
        <taxon>Alphaproteobacteria</taxon>
        <taxon>Rickettsiales</taxon>
        <taxon>Rickettsiaceae</taxon>
        <taxon>Rickettsieae</taxon>
        <taxon>Rickettsia</taxon>
        <taxon>belli group</taxon>
    </lineage>
</organism>
<keyword id="KW-0687">Ribonucleoprotein</keyword>
<keyword id="KW-0689">Ribosomal protein</keyword>